<proteinExistence type="evidence at protein level"/>
<keyword id="KW-0067">ATP-binding</keyword>
<keyword id="KW-0119">Carbohydrate metabolism</keyword>
<keyword id="KW-0903">Direct protein sequencing</keyword>
<keyword id="KW-0418">Kinase</keyword>
<keyword id="KW-0547">Nucleotide-binding</keyword>
<keyword id="KW-1185">Reference proteome</keyword>
<keyword id="KW-0808">Transferase</keyword>
<feature type="chain" id="PRO_0000234065" description="Fructokinase-2">
    <location>
        <begin position="1"/>
        <end position="336"/>
    </location>
</feature>
<sequence>MAPLGDGAAAAAAAEPNLVVSFGEMLIDFVPDVAGVSLAESGGFVKAPGGAPANVACAISKLGGSSAFVGKFGDDEFGHMLVDILKKNGVNAEGCLFDEHARTALAFVTLKSNGEREFMFYRNPSADMLLTEAELNLDLIRRAKIFHYGSISLITEPCRSAHVAAMRAAKSAGILCSYDPNVRLPLWPSEDAARAGILSIWKEADFIKVSDDEVAFLTQGDANDEKNVLSLWFDGLKLLIVTDGEKGCRYFTKDFKGSVPGFSVNTVDTTGAGDAFVGSLLVNVAKDDSIFHNEEKLREALKFSNACGAICTTKKGAIPALPTVAVAQELISKAAN</sequence>
<dbReference type="EC" id="2.7.1.4"/>
<dbReference type="EMBL" id="AB110164">
    <property type="protein sequence ID" value="BAC78556.1"/>
    <property type="molecule type" value="mRNA"/>
</dbReference>
<dbReference type="EMBL" id="AP004566">
    <property type="protein sequence ID" value="BAD09515.1"/>
    <property type="molecule type" value="Genomic_DNA"/>
</dbReference>
<dbReference type="EMBL" id="AP008214">
    <property type="protein sequence ID" value="BAF22751.1"/>
    <property type="molecule type" value="Genomic_DNA"/>
</dbReference>
<dbReference type="EMBL" id="AP014964">
    <property type="protein sequence ID" value="BAT03524.1"/>
    <property type="molecule type" value="Genomic_DNA"/>
</dbReference>
<dbReference type="EMBL" id="CM000145">
    <property type="protein sequence ID" value="EAZ41295.1"/>
    <property type="molecule type" value="Genomic_DNA"/>
</dbReference>
<dbReference type="EMBL" id="AK070120">
    <property type="protein sequence ID" value="BAG91779.1"/>
    <property type="molecule type" value="mRNA"/>
</dbReference>
<dbReference type="EMBL" id="AK099353">
    <property type="protein sequence ID" value="BAG94082.1"/>
    <property type="molecule type" value="mRNA"/>
</dbReference>
<dbReference type="RefSeq" id="XP_015650262.1">
    <property type="nucleotide sequence ID" value="XM_015794776.1"/>
</dbReference>
<dbReference type="SMR" id="Q0J8G4"/>
<dbReference type="FunCoup" id="Q0J8G4">
    <property type="interactions" value="280"/>
</dbReference>
<dbReference type="STRING" id="39947.Q0J8G4"/>
<dbReference type="PaxDb" id="39947-Q0J8G4"/>
<dbReference type="EnsemblPlants" id="Os08t0113100-01">
    <property type="protein sequence ID" value="Os08t0113100-01"/>
    <property type="gene ID" value="Os08g0113100"/>
</dbReference>
<dbReference type="Gramene" id="Os08t0113100-01">
    <property type="protein sequence ID" value="Os08t0113100-01"/>
    <property type="gene ID" value="Os08g0113100"/>
</dbReference>
<dbReference type="KEGG" id="dosa:Os08g0113100"/>
<dbReference type="eggNOG" id="KOG2855">
    <property type="taxonomic scope" value="Eukaryota"/>
</dbReference>
<dbReference type="HOGENOM" id="CLU_027634_6_1_1"/>
<dbReference type="InParanoid" id="Q0J8G4"/>
<dbReference type="OMA" id="DDQHGRF"/>
<dbReference type="OrthoDB" id="415590at2759"/>
<dbReference type="BRENDA" id="2.7.1.4">
    <property type="organism ID" value="4460"/>
</dbReference>
<dbReference type="UniPathway" id="UPA00152"/>
<dbReference type="Proteomes" id="UP000000763">
    <property type="component" value="Chromosome 8"/>
</dbReference>
<dbReference type="Proteomes" id="UP000007752">
    <property type="component" value="Chromosome 8"/>
</dbReference>
<dbReference type="Proteomes" id="UP000059680">
    <property type="component" value="Chromosome 8"/>
</dbReference>
<dbReference type="ExpressionAtlas" id="Q0J8G4">
    <property type="expression patterns" value="baseline and differential"/>
</dbReference>
<dbReference type="GO" id="GO:0005829">
    <property type="term" value="C:cytosol"/>
    <property type="evidence" value="ECO:0000318"/>
    <property type="project" value="GO_Central"/>
</dbReference>
<dbReference type="GO" id="GO:0005524">
    <property type="term" value="F:ATP binding"/>
    <property type="evidence" value="ECO:0007669"/>
    <property type="project" value="UniProtKB-KW"/>
</dbReference>
<dbReference type="GO" id="GO:0008865">
    <property type="term" value="F:fructokinase activity"/>
    <property type="evidence" value="ECO:0000318"/>
    <property type="project" value="GO_Central"/>
</dbReference>
<dbReference type="GO" id="GO:0006000">
    <property type="term" value="P:fructose metabolic process"/>
    <property type="evidence" value="ECO:0000318"/>
    <property type="project" value="GO_Central"/>
</dbReference>
<dbReference type="GO" id="GO:0019252">
    <property type="term" value="P:starch biosynthetic process"/>
    <property type="evidence" value="ECO:0007669"/>
    <property type="project" value="UniProtKB-UniPathway"/>
</dbReference>
<dbReference type="CDD" id="cd01167">
    <property type="entry name" value="bac_FRK"/>
    <property type="match status" value="1"/>
</dbReference>
<dbReference type="FunFam" id="3.40.1190.20:FF:000005">
    <property type="entry name" value="Probable fructokinase-2"/>
    <property type="match status" value="1"/>
</dbReference>
<dbReference type="Gene3D" id="3.40.1190.20">
    <property type="match status" value="1"/>
</dbReference>
<dbReference type="InterPro" id="IPR002173">
    <property type="entry name" value="Carboh/pur_kinase_PfkB_CS"/>
</dbReference>
<dbReference type="InterPro" id="IPR050306">
    <property type="entry name" value="PfkB_Carbo_kinase"/>
</dbReference>
<dbReference type="InterPro" id="IPR011611">
    <property type="entry name" value="PfkB_dom"/>
</dbReference>
<dbReference type="InterPro" id="IPR029056">
    <property type="entry name" value="Ribokinase-like"/>
</dbReference>
<dbReference type="PANTHER" id="PTHR43085:SF6">
    <property type="entry name" value="FRUCTOKINASE-5-RELATED"/>
    <property type="match status" value="1"/>
</dbReference>
<dbReference type="PANTHER" id="PTHR43085">
    <property type="entry name" value="HEXOKINASE FAMILY MEMBER"/>
    <property type="match status" value="1"/>
</dbReference>
<dbReference type="Pfam" id="PF00294">
    <property type="entry name" value="PfkB"/>
    <property type="match status" value="1"/>
</dbReference>
<dbReference type="SUPFAM" id="SSF53613">
    <property type="entry name" value="Ribokinase-like"/>
    <property type="match status" value="1"/>
</dbReference>
<dbReference type="PROSITE" id="PS00583">
    <property type="entry name" value="PFKB_KINASES_1"/>
    <property type="match status" value="1"/>
</dbReference>
<protein>
    <recommendedName>
        <fullName>Fructokinase-2</fullName>
        <ecNumber>2.7.1.4</ecNumber>
    </recommendedName>
    <alternativeName>
        <fullName>Fructokinase II</fullName>
    </alternativeName>
    <alternativeName>
        <fullName>OsFKII</fullName>
    </alternativeName>
</protein>
<evidence type="ECO:0000269" key="1">
    <source>
    </source>
</evidence>
<evidence type="ECO:0000269" key="2">
    <source>
    </source>
</evidence>
<evidence type="ECO:0000305" key="3"/>
<organism>
    <name type="scientific">Oryza sativa subsp. japonica</name>
    <name type="common">Rice</name>
    <dbReference type="NCBI Taxonomy" id="39947"/>
    <lineage>
        <taxon>Eukaryota</taxon>
        <taxon>Viridiplantae</taxon>
        <taxon>Streptophyta</taxon>
        <taxon>Embryophyta</taxon>
        <taxon>Tracheophyta</taxon>
        <taxon>Spermatophyta</taxon>
        <taxon>Magnoliopsida</taxon>
        <taxon>Liliopsida</taxon>
        <taxon>Poales</taxon>
        <taxon>Poaceae</taxon>
        <taxon>BOP clade</taxon>
        <taxon>Oryzoideae</taxon>
        <taxon>Oryzeae</taxon>
        <taxon>Oryzinae</taxon>
        <taxon>Oryza</taxon>
        <taxon>Oryza sativa</taxon>
    </lineage>
</organism>
<reference key="1">
    <citation type="journal article" date="2005" name="Plant Cell">
        <title>Functional isolation of novel nuclear proteins showing a variety of subnuclear localizations.</title>
        <authorList>
            <person name="Moriguchi K."/>
            <person name="Suzuki T."/>
            <person name="Ito Y."/>
            <person name="Yamazaki Y."/>
            <person name="Niwa Y."/>
            <person name="Kurata N."/>
        </authorList>
    </citation>
    <scope>NUCLEOTIDE SEQUENCE [MRNA]</scope>
    <source>
        <tissue>Panicle</tissue>
    </source>
</reference>
<reference key="2">
    <citation type="journal article" date="2005" name="Nature">
        <title>The map-based sequence of the rice genome.</title>
        <authorList>
            <consortium name="International rice genome sequencing project (IRGSP)"/>
        </authorList>
    </citation>
    <scope>NUCLEOTIDE SEQUENCE [LARGE SCALE GENOMIC DNA]</scope>
    <source>
        <strain>cv. Nipponbare</strain>
    </source>
</reference>
<reference key="3">
    <citation type="journal article" date="2008" name="Nucleic Acids Res.">
        <title>The rice annotation project database (RAP-DB): 2008 update.</title>
        <authorList>
            <consortium name="The rice annotation project (RAP)"/>
        </authorList>
    </citation>
    <scope>GENOME REANNOTATION</scope>
    <source>
        <strain>cv. Nipponbare</strain>
    </source>
</reference>
<reference key="4">
    <citation type="journal article" date="2013" name="Rice">
        <title>Improvement of the Oryza sativa Nipponbare reference genome using next generation sequence and optical map data.</title>
        <authorList>
            <person name="Kawahara Y."/>
            <person name="de la Bastide M."/>
            <person name="Hamilton J.P."/>
            <person name="Kanamori H."/>
            <person name="McCombie W.R."/>
            <person name="Ouyang S."/>
            <person name="Schwartz D.C."/>
            <person name="Tanaka T."/>
            <person name="Wu J."/>
            <person name="Zhou S."/>
            <person name="Childs K.L."/>
            <person name="Davidson R.M."/>
            <person name="Lin H."/>
            <person name="Quesada-Ocampo L."/>
            <person name="Vaillancourt B."/>
            <person name="Sakai H."/>
            <person name="Lee S.S."/>
            <person name="Kim J."/>
            <person name="Numa H."/>
            <person name="Itoh T."/>
            <person name="Buell C.R."/>
            <person name="Matsumoto T."/>
        </authorList>
    </citation>
    <scope>GENOME REANNOTATION</scope>
    <source>
        <strain>cv. Nipponbare</strain>
    </source>
</reference>
<reference key="5">
    <citation type="journal article" date="2005" name="PLoS Biol.">
        <title>The genomes of Oryza sativa: a history of duplications.</title>
        <authorList>
            <person name="Yu J."/>
            <person name="Wang J."/>
            <person name="Lin W."/>
            <person name="Li S."/>
            <person name="Li H."/>
            <person name="Zhou J."/>
            <person name="Ni P."/>
            <person name="Dong W."/>
            <person name="Hu S."/>
            <person name="Zeng C."/>
            <person name="Zhang J."/>
            <person name="Zhang Y."/>
            <person name="Li R."/>
            <person name="Xu Z."/>
            <person name="Li S."/>
            <person name="Li X."/>
            <person name="Zheng H."/>
            <person name="Cong L."/>
            <person name="Lin L."/>
            <person name="Yin J."/>
            <person name="Geng J."/>
            <person name="Li G."/>
            <person name="Shi J."/>
            <person name="Liu J."/>
            <person name="Lv H."/>
            <person name="Li J."/>
            <person name="Wang J."/>
            <person name="Deng Y."/>
            <person name="Ran L."/>
            <person name="Shi X."/>
            <person name="Wang X."/>
            <person name="Wu Q."/>
            <person name="Li C."/>
            <person name="Ren X."/>
            <person name="Wang J."/>
            <person name="Wang X."/>
            <person name="Li D."/>
            <person name="Liu D."/>
            <person name="Zhang X."/>
            <person name="Ji Z."/>
            <person name="Zhao W."/>
            <person name="Sun Y."/>
            <person name="Zhang Z."/>
            <person name="Bao J."/>
            <person name="Han Y."/>
            <person name="Dong L."/>
            <person name="Ji J."/>
            <person name="Chen P."/>
            <person name="Wu S."/>
            <person name="Liu J."/>
            <person name="Xiao Y."/>
            <person name="Bu D."/>
            <person name="Tan J."/>
            <person name="Yang L."/>
            <person name="Ye C."/>
            <person name="Zhang J."/>
            <person name="Xu J."/>
            <person name="Zhou Y."/>
            <person name="Yu Y."/>
            <person name="Zhang B."/>
            <person name="Zhuang S."/>
            <person name="Wei H."/>
            <person name="Liu B."/>
            <person name="Lei M."/>
            <person name="Yu H."/>
            <person name="Li Y."/>
            <person name="Xu H."/>
            <person name="Wei S."/>
            <person name="He X."/>
            <person name="Fang L."/>
            <person name="Zhang Z."/>
            <person name="Zhang Y."/>
            <person name="Huang X."/>
            <person name="Su Z."/>
            <person name="Tong W."/>
            <person name="Li J."/>
            <person name="Tong Z."/>
            <person name="Li S."/>
            <person name="Ye J."/>
            <person name="Wang L."/>
            <person name="Fang L."/>
            <person name="Lei T."/>
            <person name="Chen C.-S."/>
            <person name="Chen H.-C."/>
            <person name="Xu Z."/>
            <person name="Li H."/>
            <person name="Huang H."/>
            <person name="Zhang F."/>
            <person name="Xu H."/>
            <person name="Li N."/>
            <person name="Zhao C."/>
            <person name="Li S."/>
            <person name="Dong L."/>
            <person name="Huang Y."/>
            <person name="Li L."/>
            <person name="Xi Y."/>
            <person name="Qi Q."/>
            <person name="Li W."/>
            <person name="Zhang B."/>
            <person name="Hu W."/>
            <person name="Zhang Y."/>
            <person name="Tian X."/>
            <person name="Jiao Y."/>
            <person name="Liang X."/>
            <person name="Jin J."/>
            <person name="Gao L."/>
            <person name="Zheng W."/>
            <person name="Hao B."/>
            <person name="Liu S.-M."/>
            <person name="Wang W."/>
            <person name="Yuan L."/>
            <person name="Cao M."/>
            <person name="McDermott J."/>
            <person name="Samudrala R."/>
            <person name="Wang J."/>
            <person name="Wong G.K.-S."/>
            <person name="Yang H."/>
        </authorList>
    </citation>
    <scope>NUCLEOTIDE SEQUENCE [LARGE SCALE GENOMIC DNA]</scope>
    <source>
        <strain>cv. Nipponbare</strain>
    </source>
</reference>
<reference key="6">
    <citation type="journal article" date="2003" name="Science">
        <title>Collection, mapping, and annotation of over 28,000 cDNA clones from japonica rice.</title>
        <authorList>
            <consortium name="The rice full-length cDNA consortium"/>
        </authorList>
    </citation>
    <scope>NUCLEOTIDE SEQUENCE [LARGE SCALE MRNA]</scope>
    <source>
        <strain>cv. Nipponbare</strain>
    </source>
</reference>
<reference key="7">
    <citation type="journal article" date="2006" name="Proteomics">
        <title>Proteomic analysis of rice leaf, stem and root tissues during growth course.</title>
        <authorList>
            <person name="Nozu Y."/>
            <person name="Tsugita A."/>
            <person name="Kamijo K."/>
        </authorList>
    </citation>
    <scope>PROTEIN SEQUENCE [LARGE SCALE ANALYSIS] OF 3-9</scope>
    <scope>IDENTIFICATION BY MASS SPECTROMETRY</scope>
    <source>
        <strain>cv. Nipponbare</strain>
    </source>
</reference>
<reference key="8">
    <citation type="journal article" date="2004" name="Nucleic Acids Res.">
        <title>Rice proteome database based on two-dimensional polyacrylamide gel electrophoresis: its status in 2003.</title>
        <authorList>
            <person name="Komatsu S."/>
            <person name="Kojima K."/>
            <person name="Suzuki K."/>
            <person name="Ozaki K."/>
            <person name="Higo K."/>
        </authorList>
    </citation>
    <scope>PROTEIN SEQUENCE OF 4-13; 118-127 AND 214-223</scope>
    <scope>TISSUE SPECIFICITY</scope>
    <source>
        <strain>cv. Nipponbare</strain>
        <tissue>Anther</tissue>
        <tissue>Panicle</tissue>
        <tissue>Sheath</tissue>
        <tissue>Stem</tissue>
    </source>
</reference>
<reference key="9">
    <citation type="journal article" date="2003" name="Phytochemistry">
        <title>Isolation and characterization of two fructokinase cDNA clones from rice.</title>
        <authorList>
            <person name="Jiang H."/>
            <person name="Dian W."/>
            <person name="Liu F."/>
            <person name="Wu P."/>
        </authorList>
    </citation>
    <scope>BIOPHYSICOCHEMICAL PROPERTIES</scope>
</reference>
<name>SCRK2_ORYSJ</name>
<gene>
    <name type="primary">FRK2</name>
    <name type="synonym">FKII</name>
    <name type="ordered locus">Os08g0113100</name>
    <name type="ordered locus">LOC_Os08g02120</name>
    <name type="ORF">OsJ_024778</name>
    <name type="ORF">P0498H04.29</name>
</gene>
<comment type="function">
    <text>May play an important role in maintaining the flux of carbon towards starch formation in endosperm. May also be involved in a sugar-sensing pathway.</text>
</comment>
<comment type="catalytic activity">
    <reaction>
        <text>D-fructose + ATP = D-fructose 6-phosphate + ADP + H(+)</text>
        <dbReference type="Rhea" id="RHEA:16125"/>
        <dbReference type="ChEBI" id="CHEBI:15378"/>
        <dbReference type="ChEBI" id="CHEBI:30616"/>
        <dbReference type="ChEBI" id="CHEBI:37721"/>
        <dbReference type="ChEBI" id="CHEBI:61527"/>
        <dbReference type="ChEBI" id="CHEBI:456216"/>
        <dbReference type="EC" id="2.7.1.4"/>
    </reaction>
</comment>
<comment type="activity regulation">
    <text>Strongly inhibited at high fructose concentration.</text>
</comment>
<comment type="biophysicochemical properties">
    <kinetics>
        <KM evidence="1">0.34 mM for fructose</KM>
    </kinetics>
</comment>
<comment type="pathway">
    <text>Glycan biosynthesis; starch biosynthesis.</text>
</comment>
<comment type="tissue specificity">
    <text evidence="2">Expressed in stem, sheaths, anthers, and panicles (at protein level).</text>
</comment>
<comment type="similarity">
    <text evidence="3">Belongs to the carbohydrate kinase PfkB family.</text>
</comment>
<accession>Q0J8G4</accession>
<accession>B7EHD2</accession>
<accession>Q7XXS9</accession>
<accession>Q944F5</accession>